<reference key="1">
    <citation type="submission" date="2000-01" db="EMBL/GenBank/DDBJ databases">
        <authorList>
            <person name="Hsu T.-J."/>
            <person name="Morita H."/>
            <person name="Shiokawa K."/>
            <person name="Noguchi H."/>
        </authorList>
    </citation>
    <scope>NUCLEOTIDE SEQUENCE [MRNA]</scope>
</reference>
<feature type="chain" id="PRO_0000215984" description="Chalcone synthase LF2">
    <location>
        <begin position="1"/>
        <end position="393"/>
    </location>
</feature>
<feature type="active site" evidence="1">
    <location>
        <position position="164"/>
    </location>
</feature>
<evidence type="ECO:0000255" key="1">
    <source>
        <dbReference type="PROSITE-ProRule" id="PRU10023"/>
    </source>
</evidence>
<evidence type="ECO:0000305" key="2"/>
<dbReference type="EC" id="2.3.1.74"/>
<dbReference type="EMBL" id="AB037388">
    <property type="protein sequence ID" value="BAA90327.1"/>
    <property type="molecule type" value="mRNA"/>
</dbReference>
<dbReference type="SMR" id="Q9MB41"/>
<dbReference type="UniPathway" id="UPA00154"/>
<dbReference type="GO" id="GO:0016210">
    <property type="term" value="F:naringenin-chalcone synthase activity"/>
    <property type="evidence" value="ECO:0007669"/>
    <property type="project" value="UniProtKB-EC"/>
</dbReference>
<dbReference type="GO" id="GO:0009813">
    <property type="term" value="P:flavonoid biosynthetic process"/>
    <property type="evidence" value="ECO:0007669"/>
    <property type="project" value="UniProtKB-UniPathway"/>
</dbReference>
<dbReference type="GO" id="GO:0030639">
    <property type="term" value="P:polyketide biosynthetic process"/>
    <property type="evidence" value="ECO:0007669"/>
    <property type="project" value="TreeGrafter"/>
</dbReference>
<dbReference type="CDD" id="cd00831">
    <property type="entry name" value="CHS_like"/>
    <property type="match status" value="1"/>
</dbReference>
<dbReference type="FunFam" id="3.40.47.10:FF:000014">
    <property type="entry name" value="Chalcone synthase 1"/>
    <property type="match status" value="1"/>
</dbReference>
<dbReference type="FunFam" id="3.40.47.10:FF:000025">
    <property type="entry name" value="Chalcone synthase 2"/>
    <property type="match status" value="1"/>
</dbReference>
<dbReference type="Gene3D" id="3.40.47.10">
    <property type="match status" value="2"/>
</dbReference>
<dbReference type="InterPro" id="IPR012328">
    <property type="entry name" value="Chalcone/stilbene_synt_C"/>
</dbReference>
<dbReference type="InterPro" id="IPR001099">
    <property type="entry name" value="Chalcone/stilbene_synt_N"/>
</dbReference>
<dbReference type="InterPro" id="IPR018088">
    <property type="entry name" value="Chalcone/stilbene_synthase_AS"/>
</dbReference>
<dbReference type="InterPro" id="IPR011141">
    <property type="entry name" value="Polyketide_synthase_type-III"/>
</dbReference>
<dbReference type="InterPro" id="IPR016039">
    <property type="entry name" value="Thiolase-like"/>
</dbReference>
<dbReference type="PANTHER" id="PTHR11877:SF80">
    <property type="entry name" value="CHALCONE SYNTHASE 1"/>
    <property type="match status" value="1"/>
</dbReference>
<dbReference type="PANTHER" id="PTHR11877">
    <property type="entry name" value="HYDROXYMETHYLGLUTARYL-COA SYNTHASE"/>
    <property type="match status" value="1"/>
</dbReference>
<dbReference type="Pfam" id="PF02797">
    <property type="entry name" value="Chal_sti_synt_C"/>
    <property type="match status" value="1"/>
</dbReference>
<dbReference type="Pfam" id="PF00195">
    <property type="entry name" value="Chal_sti_synt_N"/>
    <property type="match status" value="1"/>
</dbReference>
<dbReference type="PIRSF" id="PIRSF000451">
    <property type="entry name" value="PKS_III"/>
    <property type="match status" value="1"/>
</dbReference>
<dbReference type="SUPFAM" id="SSF53901">
    <property type="entry name" value="Thiolase-like"/>
    <property type="match status" value="2"/>
</dbReference>
<dbReference type="PROSITE" id="PS00441">
    <property type="entry name" value="CHALCONE_SYNTH"/>
    <property type="match status" value="1"/>
</dbReference>
<gene>
    <name type="primary">CHS-LF2</name>
</gene>
<comment type="function">
    <text>The primary product of this enzyme is 4,2',4',6'-tetrahydroxychalcone (also termed naringenin-chalcone or chalcone) which can under specific conditions spontaneously isomerize into naringenin.</text>
</comment>
<comment type="catalytic activity">
    <reaction evidence="1">
        <text>(E)-4-coumaroyl-CoA + 3 malonyl-CoA + 3 H(+) = 2',4,4',6'-tetrahydroxychalcone + 3 CO2 + 4 CoA</text>
        <dbReference type="Rhea" id="RHEA:11128"/>
        <dbReference type="ChEBI" id="CHEBI:15378"/>
        <dbReference type="ChEBI" id="CHEBI:15413"/>
        <dbReference type="ChEBI" id="CHEBI:16526"/>
        <dbReference type="ChEBI" id="CHEBI:57287"/>
        <dbReference type="ChEBI" id="CHEBI:57384"/>
        <dbReference type="ChEBI" id="CHEBI:85008"/>
        <dbReference type="EC" id="2.3.1.74"/>
    </reaction>
</comment>
<comment type="pathway">
    <text>Secondary metabolite biosynthesis; flavonoid biosynthesis.</text>
</comment>
<comment type="similarity">
    <text evidence="2">Belongs to the thiolase-like superfamily. Chalcone/stilbene synthases family.</text>
</comment>
<accession>Q9MB41</accession>
<protein>
    <recommendedName>
        <fullName>Chalcone synthase LF2</fullName>
        <ecNumber>2.3.1.74</ecNumber>
    </recommendedName>
    <alternativeName>
        <fullName>Naringenin-chalcone synthase LF2</fullName>
    </alternativeName>
</protein>
<sequence length="393" mass="42629">MVTVEEVRKAQRAEGPATILAIGTVTPANCVNQSTYPDYYFRITNSEHKTELKEKFQRMCDKSMITKRYMHLTEEILKENPSFCEYMAPSLDARQDIAVVEVPKLGKEAAQSAIKEWGQPKSKITHVVFCTTSGVDMPGADYQLTKLLGLSPSVKRLMMYQQGCFAGGTVLRLAKDLAENNKGARVLIVCSEITVVTFRGPSETHLDSLVGQALFGDGAAAVIVGADPTPAEKPLFQLVSAAQTLAPDSCGAIDGHLREVGLTFHLLKDVPSVVSNNIEKCLFEAFNPLGISDWNSVFWIAHPGGPAILDQVEDKLGLKPEKLRATRHVLSEYGNMSSACVLFILDEMRKASSNAGLGTTGEGLEWGVLFGFGPGLTIETVVLHSVPIKPGPH</sequence>
<keyword id="KW-0012">Acyltransferase</keyword>
<keyword id="KW-0284">Flavonoid biosynthesis</keyword>
<keyword id="KW-0808">Transferase</keyword>
<proteinExistence type="evidence at transcript level"/>
<organism>
    <name type="scientific">Ipomoea batatas</name>
    <name type="common">Sweet potato</name>
    <name type="synonym">Convolvulus batatas</name>
    <dbReference type="NCBI Taxonomy" id="4120"/>
    <lineage>
        <taxon>Eukaryota</taxon>
        <taxon>Viridiplantae</taxon>
        <taxon>Streptophyta</taxon>
        <taxon>Embryophyta</taxon>
        <taxon>Tracheophyta</taxon>
        <taxon>Spermatophyta</taxon>
        <taxon>Magnoliopsida</taxon>
        <taxon>eudicotyledons</taxon>
        <taxon>Gunneridae</taxon>
        <taxon>Pentapetalae</taxon>
        <taxon>asterids</taxon>
        <taxon>lamiids</taxon>
        <taxon>Solanales</taxon>
        <taxon>Convolvulaceae</taxon>
        <taxon>Ipomoeeae</taxon>
        <taxon>Ipomoea</taxon>
    </lineage>
</organism>
<name>CHS2_IPOBA</name>